<dbReference type="EMBL" id="CT978603">
    <property type="protein sequence ID" value="CAK27038.1"/>
    <property type="molecule type" value="Genomic_DNA"/>
</dbReference>
<dbReference type="SMR" id="A5GQ79"/>
<dbReference type="STRING" id="316278.SynRCC307_0135"/>
<dbReference type="KEGG" id="syr:SynRCC307_0135"/>
<dbReference type="eggNOG" id="COG0806">
    <property type="taxonomic scope" value="Bacteria"/>
</dbReference>
<dbReference type="HOGENOM" id="CLU_077636_0_1_3"/>
<dbReference type="OrthoDB" id="9810331at2"/>
<dbReference type="Proteomes" id="UP000001115">
    <property type="component" value="Chromosome"/>
</dbReference>
<dbReference type="GO" id="GO:0005737">
    <property type="term" value="C:cytoplasm"/>
    <property type="evidence" value="ECO:0007669"/>
    <property type="project" value="UniProtKB-SubCell"/>
</dbReference>
<dbReference type="GO" id="GO:0005840">
    <property type="term" value="C:ribosome"/>
    <property type="evidence" value="ECO:0007669"/>
    <property type="project" value="InterPro"/>
</dbReference>
<dbReference type="GO" id="GO:0043022">
    <property type="term" value="F:ribosome binding"/>
    <property type="evidence" value="ECO:0007669"/>
    <property type="project" value="InterPro"/>
</dbReference>
<dbReference type="GO" id="GO:0042274">
    <property type="term" value="P:ribosomal small subunit biogenesis"/>
    <property type="evidence" value="ECO:0007669"/>
    <property type="project" value="UniProtKB-UniRule"/>
</dbReference>
<dbReference type="GO" id="GO:0006364">
    <property type="term" value="P:rRNA processing"/>
    <property type="evidence" value="ECO:0007669"/>
    <property type="project" value="UniProtKB-UniRule"/>
</dbReference>
<dbReference type="Gene3D" id="2.30.30.240">
    <property type="entry name" value="PRC-barrel domain"/>
    <property type="match status" value="1"/>
</dbReference>
<dbReference type="Gene3D" id="2.40.30.60">
    <property type="entry name" value="RimM"/>
    <property type="match status" value="1"/>
</dbReference>
<dbReference type="HAMAP" id="MF_00014">
    <property type="entry name" value="Ribosome_mat_RimM"/>
    <property type="match status" value="1"/>
</dbReference>
<dbReference type="InterPro" id="IPR011033">
    <property type="entry name" value="PRC_barrel-like_sf"/>
</dbReference>
<dbReference type="InterPro" id="IPR056792">
    <property type="entry name" value="PRC_RimM"/>
</dbReference>
<dbReference type="InterPro" id="IPR011961">
    <property type="entry name" value="RimM"/>
</dbReference>
<dbReference type="InterPro" id="IPR002676">
    <property type="entry name" value="RimM_N"/>
</dbReference>
<dbReference type="InterPro" id="IPR036976">
    <property type="entry name" value="RimM_N_sf"/>
</dbReference>
<dbReference type="InterPro" id="IPR009000">
    <property type="entry name" value="Transl_B-barrel_sf"/>
</dbReference>
<dbReference type="NCBIfam" id="TIGR02273">
    <property type="entry name" value="16S_RimM"/>
    <property type="match status" value="1"/>
</dbReference>
<dbReference type="PANTHER" id="PTHR33692">
    <property type="entry name" value="RIBOSOME MATURATION FACTOR RIMM"/>
    <property type="match status" value="1"/>
</dbReference>
<dbReference type="PANTHER" id="PTHR33692:SF1">
    <property type="entry name" value="RIBOSOME MATURATION FACTOR RIMM"/>
    <property type="match status" value="1"/>
</dbReference>
<dbReference type="Pfam" id="PF24986">
    <property type="entry name" value="PRC_RimM"/>
    <property type="match status" value="1"/>
</dbReference>
<dbReference type="Pfam" id="PF01782">
    <property type="entry name" value="RimM"/>
    <property type="match status" value="1"/>
</dbReference>
<dbReference type="SUPFAM" id="SSF50346">
    <property type="entry name" value="PRC-barrel domain"/>
    <property type="match status" value="1"/>
</dbReference>
<dbReference type="SUPFAM" id="SSF50447">
    <property type="entry name" value="Translation proteins"/>
    <property type="match status" value="1"/>
</dbReference>
<gene>
    <name evidence="1" type="primary">rimM</name>
    <name type="ordered locus">SynRCC307_0135</name>
</gene>
<sequence length="175" mass="19431">MADEFLVVGQVVAAQGLKGEVRILPASDFPQRFTEPGSRWLRRRGHNEQQVQLLSGRQLPGKELFVVRFEGINDRTAAESLVHQEFLVAADDIPELEDGEFHVRDLQGLSVRLDTESDPIGVVVDLHHGGNDLLEIELKADGRRCLVPFVDAIVPQVELEEGWLLITPPKGLLDG</sequence>
<feature type="chain" id="PRO_0000351802" description="Ribosome maturation factor RimM">
    <location>
        <begin position="1"/>
        <end position="175"/>
    </location>
</feature>
<feature type="domain" description="PRC barrel" evidence="1">
    <location>
        <begin position="98"/>
        <end position="172"/>
    </location>
</feature>
<accession>A5GQ79</accession>
<reference key="1">
    <citation type="submission" date="2006-05" db="EMBL/GenBank/DDBJ databases">
        <authorList>
            <consortium name="Genoscope"/>
        </authorList>
    </citation>
    <scope>NUCLEOTIDE SEQUENCE [LARGE SCALE GENOMIC DNA]</scope>
    <source>
        <strain>RCC307</strain>
    </source>
</reference>
<evidence type="ECO:0000255" key="1">
    <source>
        <dbReference type="HAMAP-Rule" id="MF_00014"/>
    </source>
</evidence>
<keyword id="KW-0143">Chaperone</keyword>
<keyword id="KW-0963">Cytoplasm</keyword>
<keyword id="KW-1185">Reference proteome</keyword>
<keyword id="KW-0690">Ribosome biogenesis</keyword>
<keyword id="KW-0698">rRNA processing</keyword>
<organism>
    <name type="scientific">Synechococcus sp. (strain RCC307)</name>
    <dbReference type="NCBI Taxonomy" id="316278"/>
    <lineage>
        <taxon>Bacteria</taxon>
        <taxon>Bacillati</taxon>
        <taxon>Cyanobacteriota</taxon>
        <taxon>Cyanophyceae</taxon>
        <taxon>Synechococcales</taxon>
        <taxon>Synechococcaceae</taxon>
        <taxon>Synechococcus</taxon>
    </lineage>
</organism>
<name>RIMM_SYNR3</name>
<comment type="function">
    <text evidence="1">An accessory protein needed during the final step in the assembly of 30S ribosomal subunit, possibly for assembly of the head region. Essential for efficient processing of 16S rRNA. May be needed both before and after RbfA during the maturation of 16S rRNA. It has affinity for free ribosomal 30S subunits but not for 70S ribosomes.</text>
</comment>
<comment type="subunit">
    <text evidence="1">Binds ribosomal protein uS19.</text>
</comment>
<comment type="subcellular location">
    <subcellularLocation>
        <location evidence="1">Cytoplasm</location>
    </subcellularLocation>
</comment>
<comment type="domain">
    <text evidence="1">The PRC barrel domain binds ribosomal protein uS19.</text>
</comment>
<comment type="similarity">
    <text evidence="1">Belongs to the RimM family.</text>
</comment>
<proteinExistence type="inferred from homology"/>
<protein>
    <recommendedName>
        <fullName evidence="1">Ribosome maturation factor RimM</fullName>
    </recommendedName>
</protein>